<name>EFG_MYCA1</name>
<reference key="1">
    <citation type="submission" date="2006-10" db="EMBL/GenBank/DDBJ databases">
        <authorList>
            <person name="Fleischmann R.D."/>
            <person name="Dodson R.J."/>
            <person name="Haft D.H."/>
            <person name="Merkel J.S."/>
            <person name="Nelson W.C."/>
            <person name="Fraser C.M."/>
        </authorList>
    </citation>
    <scope>NUCLEOTIDE SEQUENCE [LARGE SCALE GENOMIC DNA]</scope>
    <source>
        <strain>104</strain>
    </source>
</reference>
<feature type="chain" id="PRO_1000008852" description="Elongation factor G">
    <location>
        <begin position="1"/>
        <end position="701"/>
    </location>
</feature>
<feature type="domain" description="tr-type G">
    <location>
        <begin position="11"/>
        <end position="287"/>
    </location>
</feature>
<feature type="binding site" evidence="1">
    <location>
        <begin position="20"/>
        <end position="27"/>
    </location>
    <ligand>
        <name>GTP</name>
        <dbReference type="ChEBI" id="CHEBI:37565"/>
    </ligand>
</feature>
<feature type="binding site" evidence="1">
    <location>
        <begin position="84"/>
        <end position="88"/>
    </location>
    <ligand>
        <name>GTP</name>
        <dbReference type="ChEBI" id="CHEBI:37565"/>
    </ligand>
</feature>
<feature type="binding site" evidence="1">
    <location>
        <begin position="138"/>
        <end position="141"/>
    </location>
    <ligand>
        <name>GTP</name>
        <dbReference type="ChEBI" id="CHEBI:37565"/>
    </ligand>
</feature>
<evidence type="ECO:0000255" key="1">
    <source>
        <dbReference type="HAMAP-Rule" id="MF_00054"/>
    </source>
</evidence>
<proteinExistence type="inferred from homology"/>
<gene>
    <name evidence="1" type="primary">fusA</name>
    <name type="ordered locus">MAV_4490</name>
</gene>
<organism>
    <name type="scientific">Mycobacterium avium (strain 104)</name>
    <dbReference type="NCBI Taxonomy" id="243243"/>
    <lineage>
        <taxon>Bacteria</taxon>
        <taxon>Bacillati</taxon>
        <taxon>Actinomycetota</taxon>
        <taxon>Actinomycetes</taxon>
        <taxon>Mycobacteriales</taxon>
        <taxon>Mycobacteriaceae</taxon>
        <taxon>Mycobacterium</taxon>
        <taxon>Mycobacterium avium complex (MAC)</taxon>
    </lineage>
</organism>
<sequence>MAQKDVLTDLTKVRNIGIMAHIDAGKTTTTERILYYTGISYKIGEVHDGAATMDWMEQEQERGITITSAATTCFWNDNQINIIDTPGHVDFTVEVERSLRVLDGAVAVFDGKEGVEPQSEQVWRQADKYDVPRICFVNKMDKIGADFYFSVRTMEERLGANVIPIQIPVGSEGDFEGVVDLVEMKAKVWSAEAKLGEKYDVVDIPADLQEKAEEYRTKLLEAVAETDEALLDKYLGGEELTIEEIKGAIRKLTISSEAYPVLCGSAFKNKGVQPMLDAVIDYLPSPLDVPPAEGHVPGKEEELITRKPSTDEPFSALAFKVATHPFFGKLTYVRVYSGKVDSGSQVINSTKGKKERLGKLFQMHSNKENPVETASAGHIYAVIGLKDTTTGDTLSDPNHQIVLESMTFPDPVIEVAIEPKTKSDQEKLSLSIQKLAEEDPTFKVHLDQETGQTVIGGMGELHLDILVDRMRREFKVEANVGKPQVAYKETIRRKVENVEYTHKKQTGGSGQFAKVIINLEPFTGEDGATYEFENKVTGGRIPREYIPSVDAGAQDAMQYGVLAGYPLVNLKVTLLDGAFHEVDSSEMAFKIAGSQVLKKAAAQAQPVILEPIMAVEVTTPEDYMGDVIGDLNSRRGQIQAMEERSGARVVKAHVPLSEMFGYVGDLRSKTQGRANYSMVFDSYAEVPANVSKEIIAKATGQ</sequence>
<accession>A0QL36</accession>
<keyword id="KW-0963">Cytoplasm</keyword>
<keyword id="KW-0251">Elongation factor</keyword>
<keyword id="KW-0342">GTP-binding</keyword>
<keyword id="KW-0547">Nucleotide-binding</keyword>
<keyword id="KW-0648">Protein biosynthesis</keyword>
<comment type="function">
    <text evidence="1">Catalyzes the GTP-dependent ribosomal translocation step during translation elongation. During this step, the ribosome changes from the pre-translocational (PRE) to the post-translocational (POST) state as the newly formed A-site-bound peptidyl-tRNA and P-site-bound deacylated tRNA move to the P and E sites, respectively. Catalyzes the coordinated movement of the two tRNA molecules, the mRNA and conformational changes in the ribosome.</text>
</comment>
<comment type="subcellular location">
    <subcellularLocation>
        <location evidence="1">Cytoplasm</location>
    </subcellularLocation>
</comment>
<comment type="similarity">
    <text evidence="1">Belongs to the TRAFAC class translation factor GTPase superfamily. Classic translation factor GTPase family. EF-G/EF-2 subfamily.</text>
</comment>
<dbReference type="EMBL" id="CP000479">
    <property type="protein sequence ID" value="ABK67903.1"/>
    <property type="molecule type" value="Genomic_DNA"/>
</dbReference>
<dbReference type="RefSeq" id="WP_003879424.1">
    <property type="nucleotide sequence ID" value="NC_008595.1"/>
</dbReference>
<dbReference type="SMR" id="A0QL36"/>
<dbReference type="GeneID" id="75272004"/>
<dbReference type="KEGG" id="mav:MAV_4490"/>
<dbReference type="HOGENOM" id="CLU_002794_4_1_11"/>
<dbReference type="Proteomes" id="UP000001574">
    <property type="component" value="Chromosome"/>
</dbReference>
<dbReference type="GO" id="GO:0005737">
    <property type="term" value="C:cytoplasm"/>
    <property type="evidence" value="ECO:0007669"/>
    <property type="project" value="UniProtKB-SubCell"/>
</dbReference>
<dbReference type="GO" id="GO:0005525">
    <property type="term" value="F:GTP binding"/>
    <property type="evidence" value="ECO:0007669"/>
    <property type="project" value="UniProtKB-UniRule"/>
</dbReference>
<dbReference type="GO" id="GO:0003924">
    <property type="term" value="F:GTPase activity"/>
    <property type="evidence" value="ECO:0007669"/>
    <property type="project" value="InterPro"/>
</dbReference>
<dbReference type="GO" id="GO:0003746">
    <property type="term" value="F:translation elongation factor activity"/>
    <property type="evidence" value="ECO:0007669"/>
    <property type="project" value="UniProtKB-UniRule"/>
</dbReference>
<dbReference type="GO" id="GO:0032790">
    <property type="term" value="P:ribosome disassembly"/>
    <property type="evidence" value="ECO:0007669"/>
    <property type="project" value="TreeGrafter"/>
</dbReference>
<dbReference type="CDD" id="cd01886">
    <property type="entry name" value="EF-G"/>
    <property type="match status" value="1"/>
</dbReference>
<dbReference type="CDD" id="cd16262">
    <property type="entry name" value="EFG_III"/>
    <property type="match status" value="1"/>
</dbReference>
<dbReference type="CDD" id="cd01434">
    <property type="entry name" value="EFG_mtEFG1_IV"/>
    <property type="match status" value="1"/>
</dbReference>
<dbReference type="CDD" id="cd03713">
    <property type="entry name" value="EFG_mtEFG_C"/>
    <property type="match status" value="1"/>
</dbReference>
<dbReference type="CDD" id="cd04088">
    <property type="entry name" value="EFG_mtEFG_II"/>
    <property type="match status" value="1"/>
</dbReference>
<dbReference type="FunFam" id="2.40.30.10:FF:000006">
    <property type="entry name" value="Elongation factor G"/>
    <property type="match status" value="1"/>
</dbReference>
<dbReference type="FunFam" id="3.30.230.10:FF:000003">
    <property type="entry name" value="Elongation factor G"/>
    <property type="match status" value="1"/>
</dbReference>
<dbReference type="FunFam" id="3.30.70.240:FF:000001">
    <property type="entry name" value="Elongation factor G"/>
    <property type="match status" value="1"/>
</dbReference>
<dbReference type="FunFam" id="3.30.70.870:FF:000001">
    <property type="entry name" value="Elongation factor G"/>
    <property type="match status" value="1"/>
</dbReference>
<dbReference type="FunFam" id="3.40.50.300:FF:000029">
    <property type="entry name" value="Elongation factor G"/>
    <property type="match status" value="1"/>
</dbReference>
<dbReference type="Gene3D" id="3.30.230.10">
    <property type="match status" value="1"/>
</dbReference>
<dbReference type="Gene3D" id="3.30.70.240">
    <property type="match status" value="1"/>
</dbReference>
<dbReference type="Gene3D" id="3.30.70.870">
    <property type="entry name" value="Elongation Factor G (Translational Gtpase), domain 3"/>
    <property type="match status" value="1"/>
</dbReference>
<dbReference type="Gene3D" id="3.40.50.300">
    <property type="entry name" value="P-loop containing nucleotide triphosphate hydrolases"/>
    <property type="match status" value="1"/>
</dbReference>
<dbReference type="Gene3D" id="2.40.30.10">
    <property type="entry name" value="Translation factors"/>
    <property type="match status" value="1"/>
</dbReference>
<dbReference type="HAMAP" id="MF_00054_B">
    <property type="entry name" value="EF_G_EF_2_B"/>
    <property type="match status" value="1"/>
</dbReference>
<dbReference type="InterPro" id="IPR041095">
    <property type="entry name" value="EFG_II"/>
</dbReference>
<dbReference type="InterPro" id="IPR009022">
    <property type="entry name" value="EFG_III"/>
</dbReference>
<dbReference type="InterPro" id="IPR035647">
    <property type="entry name" value="EFG_III/V"/>
</dbReference>
<dbReference type="InterPro" id="IPR047872">
    <property type="entry name" value="EFG_IV"/>
</dbReference>
<dbReference type="InterPro" id="IPR035649">
    <property type="entry name" value="EFG_V"/>
</dbReference>
<dbReference type="InterPro" id="IPR000640">
    <property type="entry name" value="EFG_V-like"/>
</dbReference>
<dbReference type="InterPro" id="IPR004161">
    <property type="entry name" value="EFTu-like_2"/>
</dbReference>
<dbReference type="InterPro" id="IPR031157">
    <property type="entry name" value="G_TR_CS"/>
</dbReference>
<dbReference type="InterPro" id="IPR027417">
    <property type="entry name" value="P-loop_NTPase"/>
</dbReference>
<dbReference type="InterPro" id="IPR020568">
    <property type="entry name" value="Ribosomal_Su5_D2-typ_SF"/>
</dbReference>
<dbReference type="InterPro" id="IPR014721">
    <property type="entry name" value="Ribsml_uS5_D2-typ_fold_subgr"/>
</dbReference>
<dbReference type="InterPro" id="IPR005225">
    <property type="entry name" value="Small_GTP-bd"/>
</dbReference>
<dbReference type="InterPro" id="IPR000795">
    <property type="entry name" value="T_Tr_GTP-bd_dom"/>
</dbReference>
<dbReference type="InterPro" id="IPR009000">
    <property type="entry name" value="Transl_B-barrel_sf"/>
</dbReference>
<dbReference type="InterPro" id="IPR004540">
    <property type="entry name" value="Transl_elong_EFG/EF2"/>
</dbReference>
<dbReference type="InterPro" id="IPR005517">
    <property type="entry name" value="Transl_elong_EFG/EF2_IV"/>
</dbReference>
<dbReference type="NCBIfam" id="TIGR00484">
    <property type="entry name" value="EF-G"/>
    <property type="match status" value="1"/>
</dbReference>
<dbReference type="NCBIfam" id="NF009381">
    <property type="entry name" value="PRK12740.1-5"/>
    <property type="match status" value="1"/>
</dbReference>
<dbReference type="NCBIfam" id="TIGR00231">
    <property type="entry name" value="small_GTP"/>
    <property type="match status" value="1"/>
</dbReference>
<dbReference type="PANTHER" id="PTHR43261:SF1">
    <property type="entry name" value="RIBOSOME-RELEASING FACTOR 2, MITOCHONDRIAL"/>
    <property type="match status" value="1"/>
</dbReference>
<dbReference type="PANTHER" id="PTHR43261">
    <property type="entry name" value="TRANSLATION ELONGATION FACTOR G-RELATED"/>
    <property type="match status" value="1"/>
</dbReference>
<dbReference type="Pfam" id="PF00679">
    <property type="entry name" value="EFG_C"/>
    <property type="match status" value="1"/>
</dbReference>
<dbReference type="Pfam" id="PF14492">
    <property type="entry name" value="EFG_III"/>
    <property type="match status" value="1"/>
</dbReference>
<dbReference type="Pfam" id="PF03764">
    <property type="entry name" value="EFG_IV"/>
    <property type="match status" value="1"/>
</dbReference>
<dbReference type="Pfam" id="PF00009">
    <property type="entry name" value="GTP_EFTU"/>
    <property type="match status" value="1"/>
</dbReference>
<dbReference type="Pfam" id="PF03144">
    <property type="entry name" value="GTP_EFTU_D2"/>
    <property type="match status" value="1"/>
</dbReference>
<dbReference type="PRINTS" id="PR00315">
    <property type="entry name" value="ELONGATNFCT"/>
</dbReference>
<dbReference type="SMART" id="SM00838">
    <property type="entry name" value="EFG_C"/>
    <property type="match status" value="1"/>
</dbReference>
<dbReference type="SMART" id="SM00889">
    <property type="entry name" value="EFG_IV"/>
    <property type="match status" value="1"/>
</dbReference>
<dbReference type="SUPFAM" id="SSF54980">
    <property type="entry name" value="EF-G C-terminal domain-like"/>
    <property type="match status" value="2"/>
</dbReference>
<dbReference type="SUPFAM" id="SSF52540">
    <property type="entry name" value="P-loop containing nucleoside triphosphate hydrolases"/>
    <property type="match status" value="1"/>
</dbReference>
<dbReference type="SUPFAM" id="SSF54211">
    <property type="entry name" value="Ribosomal protein S5 domain 2-like"/>
    <property type="match status" value="1"/>
</dbReference>
<dbReference type="SUPFAM" id="SSF50447">
    <property type="entry name" value="Translation proteins"/>
    <property type="match status" value="1"/>
</dbReference>
<dbReference type="PROSITE" id="PS00301">
    <property type="entry name" value="G_TR_1"/>
    <property type="match status" value="1"/>
</dbReference>
<dbReference type="PROSITE" id="PS51722">
    <property type="entry name" value="G_TR_2"/>
    <property type="match status" value="1"/>
</dbReference>
<protein>
    <recommendedName>
        <fullName evidence="1">Elongation factor G</fullName>
        <shortName evidence="1">EF-G</shortName>
    </recommendedName>
</protein>